<comment type="function">
    <text evidence="1">Catalyzes the oxidation of 5,10-methylenetetrahydrofolate to 5,10-methenyltetrahydrofolate and then the hydrolysis of 5,10-methenyltetrahydrofolate to 10-formyltetrahydrofolate.</text>
</comment>
<comment type="catalytic activity">
    <reaction evidence="1">
        <text>(6R)-5,10-methylene-5,6,7,8-tetrahydrofolate + NADP(+) = (6R)-5,10-methenyltetrahydrofolate + NADPH</text>
        <dbReference type="Rhea" id="RHEA:22812"/>
        <dbReference type="ChEBI" id="CHEBI:15636"/>
        <dbReference type="ChEBI" id="CHEBI:57455"/>
        <dbReference type="ChEBI" id="CHEBI:57783"/>
        <dbReference type="ChEBI" id="CHEBI:58349"/>
        <dbReference type="EC" id="1.5.1.5"/>
    </reaction>
</comment>
<comment type="catalytic activity">
    <reaction evidence="1">
        <text>(6R)-5,10-methenyltetrahydrofolate + H2O = (6R)-10-formyltetrahydrofolate + H(+)</text>
        <dbReference type="Rhea" id="RHEA:23700"/>
        <dbReference type="ChEBI" id="CHEBI:15377"/>
        <dbReference type="ChEBI" id="CHEBI:15378"/>
        <dbReference type="ChEBI" id="CHEBI:57455"/>
        <dbReference type="ChEBI" id="CHEBI:195366"/>
        <dbReference type="EC" id="3.5.4.9"/>
    </reaction>
</comment>
<comment type="pathway">
    <text evidence="1">One-carbon metabolism; tetrahydrofolate interconversion.</text>
</comment>
<comment type="subunit">
    <text evidence="1">Homodimer.</text>
</comment>
<comment type="similarity">
    <text evidence="1">Belongs to the tetrahydrofolate dehydrogenase/cyclohydrolase family.</text>
</comment>
<reference key="1">
    <citation type="journal article" date="2008" name="BMC Genomics">
        <title>The genome of Aeromonas salmonicida subsp. salmonicida A449: insights into the evolution of a fish pathogen.</title>
        <authorList>
            <person name="Reith M.E."/>
            <person name="Singh R.K."/>
            <person name="Curtis B."/>
            <person name="Boyd J.M."/>
            <person name="Bouevitch A."/>
            <person name="Kimball J."/>
            <person name="Munholland J."/>
            <person name="Murphy C."/>
            <person name="Sarty D."/>
            <person name="Williams J."/>
            <person name="Nash J.H."/>
            <person name="Johnson S.C."/>
            <person name="Brown L.L."/>
        </authorList>
    </citation>
    <scope>NUCLEOTIDE SEQUENCE [LARGE SCALE GENOMIC DNA]</scope>
    <source>
        <strain>A449</strain>
    </source>
</reference>
<name>FOLD_AERS4</name>
<evidence type="ECO:0000255" key="1">
    <source>
        <dbReference type="HAMAP-Rule" id="MF_01576"/>
    </source>
</evidence>
<feature type="chain" id="PRO_0000305789" description="Bifunctional protein FolD">
    <location>
        <begin position="1"/>
        <end position="287"/>
    </location>
</feature>
<feature type="binding site" evidence="1">
    <location>
        <begin position="166"/>
        <end position="168"/>
    </location>
    <ligand>
        <name>NADP(+)</name>
        <dbReference type="ChEBI" id="CHEBI:58349"/>
    </ligand>
</feature>
<feature type="binding site" evidence="1">
    <location>
        <position position="232"/>
    </location>
    <ligand>
        <name>NADP(+)</name>
        <dbReference type="ChEBI" id="CHEBI:58349"/>
    </ligand>
</feature>
<sequence>MSAKIIDGKQVAQTIRNQVAAQVQQRLAQGKRAPGLAVILVGVDPASQVYVGSKRRACEEVGFISRSYDLSATASQEELLALIDRLNDDADVDGILVQLPLPAHCDTTQVLERIRPDKDVDGFHPYNVGRLAQRIPALRPCTPKGIMTLIETTGVKTHGLHAVVVGASNIVGRPMTLELLLAGCTTTTCHRFTQDLEQQVRRADLLVVAVGKPNFIPGEWVKPGALVIDVGINRLADGSLVGDVEFETARNHASFITPVPGGVGPMTVASLMENTLSACQDYHDQAL</sequence>
<accession>A4SNM0</accession>
<organism>
    <name type="scientific">Aeromonas salmonicida (strain A449)</name>
    <dbReference type="NCBI Taxonomy" id="382245"/>
    <lineage>
        <taxon>Bacteria</taxon>
        <taxon>Pseudomonadati</taxon>
        <taxon>Pseudomonadota</taxon>
        <taxon>Gammaproteobacteria</taxon>
        <taxon>Aeromonadales</taxon>
        <taxon>Aeromonadaceae</taxon>
        <taxon>Aeromonas</taxon>
    </lineage>
</organism>
<proteinExistence type="inferred from homology"/>
<keyword id="KW-0028">Amino-acid biosynthesis</keyword>
<keyword id="KW-0368">Histidine biosynthesis</keyword>
<keyword id="KW-0378">Hydrolase</keyword>
<keyword id="KW-0486">Methionine biosynthesis</keyword>
<keyword id="KW-0511">Multifunctional enzyme</keyword>
<keyword id="KW-0521">NADP</keyword>
<keyword id="KW-0554">One-carbon metabolism</keyword>
<keyword id="KW-0560">Oxidoreductase</keyword>
<keyword id="KW-0658">Purine biosynthesis</keyword>
<dbReference type="EC" id="1.5.1.5" evidence="1"/>
<dbReference type="EC" id="3.5.4.9" evidence="1"/>
<dbReference type="EMBL" id="CP000644">
    <property type="protein sequence ID" value="ABO90492.1"/>
    <property type="molecule type" value="Genomic_DNA"/>
</dbReference>
<dbReference type="RefSeq" id="WP_005310722.1">
    <property type="nucleotide sequence ID" value="NC_009348.1"/>
</dbReference>
<dbReference type="SMR" id="A4SNM0"/>
<dbReference type="STRING" id="29491.GCA_000820065_01477"/>
<dbReference type="GeneID" id="79880237"/>
<dbReference type="KEGG" id="asa:ASA_2449"/>
<dbReference type="eggNOG" id="COG0190">
    <property type="taxonomic scope" value="Bacteria"/>
</dbReference>
<dbReference type="HOGENOM" id="CLU_034045_2_1_6"/>
<dbReference type="UniPathway" id="UPA00193"/>
<dbReference type="Proteomes" id="UP000000225">
    <property type="component" value="Chromosome"/>
</dbReference>
<dbReference type="GO" id="GO:0005829">
    <property type="term" value="C:cytosol"/>
    <property type="evidence" value="ECO:0007669"/>
    <property type="project" value="TreeGrafter"/>
</dbReference>
<dbReference type="GO" id="GO:0004477">
    <property type="term" value="F:methenyltetrahydrofolate cyclohydrolase activity"/>
    <property type="evidence" value="ECO:0007669"/>
    <property type="project" value="UniProtKB-UniRule"/>
</dbReference>
<dbReference type="GO" id="GO:0004488">
    <property type="term" value="F:methylenetetrahydrofolate dehydrogenase (NADP+) activity"/>
    <property type="evidence" value="ECO:0007669"/>
    <property type="project" value="UniProtKB-UniRule"/>
</dbReference>
<dbReference type="GO" id="GO:0000105">
    <property type="term" value="P:L-histidine biosynthetic process"/>
    <property type="evidence" value="ECO:0007669"/>
    <property type="project" value="UniProtKB-KW"/>
</dbReference>
<dbReference type="GO" id="GO:0009086">
    <property type="term" value="P:methionine biosynthetic process"/>
    <property type="evidence" value="ECO:0007669"/>
    <property type="project" value="UniProtKB-KW"/>
</dbReference>
<dbReference type="GO" id="GO:0006164">
    <property type="term" value="P:purine nucleotide biosynthetic process"/>
    <property type="evidence" value="ECO:0007669"/>
    <property type="project" value="UniProtKB-KW"/>
</dbReference>
<dbReference type="GO" id="GO:0035999">
    <property type="term" value="P:tetrahydrofolate interconversion"/>
    <property type="evidence" value="ECO:0007669"/>
    <property type="project" value="UniProtKB-UniRule"/>
</dbReference>
<dbReference type="CDD" id="cd01080">
    <property type="entry name" value="NAD_bind_m-THF_DH_Cyclohyd"/>
    <property type="match status" value="1"/>
</dbReference>
<dbReference type="FunFam" id="3.40.50.10860:FF:000001">
    <property type="entry name" value="Bifunctional protein FolD"/>
    <property type="match status" value="1"/>
</dbReference>
<dbReference type="FunFam" id="3.40.50.720:FF:000006">
    <property type="entry name" value="Bifunctional protein FolD"/>
    <property type="match status" value="1"/>
</dbReference>
<dbReference type="Gene3D" id="3.40.50.10860">
    <property type="entry name" value="Leucine Dehydrogenase, chain A, domain 1"/>
    <property type="match status" value="1"/>
</dbReference>
<dbReference type="Gene3D" id="3.40.50.720">
    <property type="entry name" value="NAD(P)-binding Rossmann-like Domain"/>
    <property type="match status" value="1"/>
</dbReference>
<dbReference type="HAMAP" id="MF_01576">
    <property type="entry name" value="THF_DHG_CYH"/>
    <property type="match status" value="1"/>
</dbReference>
<dbReference type="InterPro" id="IPR046346">
    <property type="entry name" value="Aminoacid_DH-like_N_sf"/>
</dbReference>
<dbReference type="InterPro" id="IPR036291">
    <property type="entry name" value="NAD(P)-bd_dom_sf"/>
</dbReference>
<dbReference type="InterPro" id="IPR000672">
    <property type="entry name" value="THF_DH/CycHdrlase"/>
</dbReference>
<dbReference type="InterPro" id="IPR020630">
    <property type="entry name" value="THF_DH/CycHdrlase_cat_dom"/>
</dbReference>
<dbReference type="InterPro" id="IPR020867">
    <property type="entry name" value="THF_DH/CycHdrlase_CS"/>
</dbReference>
<dbReference type="InterPro" id="IPR020631">
    <property type="entry name" value="THF_DH/CycHdrlase_NAD-bd_dom"/>
</dbReference>
<dbReference type="NCBIfam" id="NF008058">
    <property type="entry name" value="PRK10792.1"/>
    <property type="match status" value="1"/>
</dbReference>
<dbReference type="NCBIfam" id="NF010783">
    <property type="entry name" value="PRK14186.1"/>
    <property type="match status" value="1"/>
</dbReference>
<dbReference type="PANTHER" id="PTHR48099:SF5">
    <property type="entry name" value="C-1-TETRAHYDROFOLATE SYNTHASE, CYTOPLASMIC"/>
    <property type="match status" value="1"/>
</dbReference>
<dbReference type="PANTHER" id="PTHR48099">
    <property type="entry name" value="C-1-TETRAHYDROFOLATE SYNTHASE, CYTOPLASMIC-RELATED"/>
    <property type="match status" value="1"/>
</dbReference>
<dbReference type="Pfam" id="PF00763">
    <property type="entry name" value="THF_DHG_CYH"/>
    <property type="match status" value="1"/>
</dbReference>
<dbReference type="Pfam" id="PF02882">
    <property type="entry name" value="THF_DHG_CYH_C"/>
    <property type="match status" value="1"/>
</dbReference>
<dbReference type="PRINTS" id="PR00085">
    <property type="entry name" value="THFDHDRGNASE"/>
</dbReference>
<dbReference type="SUPFAM" id="SSF53223">
    <property type="entry name" value="Aminoacid dehydrogenase-like, N-terminal domain"/>
    <property type="match status" value="1"/>
</dbReference>
<dbReference type="SUPFAM" id="SSF51735">
    <property type="entry name" value="NAD(P)-binding Rossmann-fold domains"/>
    <property type="match status" value="1"/>
</dbReference>
<dbReference type="PROSITE" id="PS00766">
    <property type="entry name" value="THF_DHG_CYH_1"/>
    <property type="match status" value="1"/>
</dbReference>
<dbReference type="PROSITE" id="PS00767">
    <property type="entry name" value="THF_DHG_CYH_2"/>
    <property type="match status" value="1"/>
</dbReference>
<gene>
    <name evidence="1" type="primary">folD</name>
    <name type="ordered locus">ASA_2449</name>
</gene>
<protein>
    <recommendedName>
        <fullName evidence="1">Bifunctional protein FolD</fullName>
    </recommendedName>
    <domain>
        <recommendedName>
            <fullName evidence="1">Methylenetetrahydrofolate dehydrogenase</fullName>
            <ecNumber evidence="1">1.5.1.5</ecNumber>
        </recommendedName>
    </domain>
    <domain>
        <recommendedName>
            <fullName evidence="1">Methenyltetrahydrofolate cyclohydrolase</fullName>
            <ecNumber evidence="1">3.5.4.9</ecNumber>
        </recommendedName>
    </domain>
</protein>